<sequence length="374" mass="43881">MRAPMPQKEQAPRMDTSPPEERLEKQNEKLNNQEEEMEFKELDDLREALANLRGLSEEERSEKAMLRSRIEDQSQLICILKRRSDEALERCQILELLNAELEEKMMQEAEKLKAQGEYTRKLEERFMTLAANHELMIRFKDEYKSENIKLREENEKLKLENSSLFSQALKDEEAKVLQLTVRCEALTGELETLKERCAQDACQAQAREKELLELQSQQACTHTKKTEQLRSQLQTLKQQHQQAVEQMAEAEETHSSLSQELQARLQTVTREKEELLQLSMERGKVLQNKQAEIRQLEEKLEIANEGRKHALERFKQEAVAVDSNLRVRELQCKVDGIQKAYDELRLQSEAFKKHSLDLLSKERELNGKLRHLFP</sequence>
<evidence type="ECO:0000250" key="1"/>
<evidence type="ECO:0000250" key="2">
    <source>
        <dbReference type="UniProtKB" id="Q9DA73"/>
    </source>
</evidence>
<evidence type="ECO:0000255" key="3"/>
<evidence type="ECO:0000256" key="4">
    <source>
        <dbReference type="SAM" id="MobiDB-lite"/>
    </source>
</evidence>
<evidence type="ECO:0000305" key="5"/>
<feature type="chain" id="PRO_0000271025" description="Coiled-coil domain-containing protein 89">
    <location>
        <begin position="1"/>
        <end position="374"/>
    </location>
</feature>
<feature type="region of interest" description="Disordered" evidence="4">
    <location>
        <begin position="1"/>
        <end position="38"/>
    </location>
</feature>
<feature type="coiled-coil region" evidence="3">
    <location>
        <begin position="19"/>
        <end position="350"/>
    </location>
</feature>
<feature type="compositionally biased region" description="Basic and acidic residues" evidence="4">
    <location>
        <begin position="19"/>
        <end position="32"/>
    </location>
</feature>
<feature type="modified residue" description="Phosphothreonine" evidence="2">
    <location>
        <position position="16"/>
    </location>
</feature>
<organism>
    <name type="scientific">Macaca fascicularis</name>
    <name type="common">Crab-eating macaque</name>
    <name type="synonym">Cynomolgus monkey</name>
    <dbReference type="NCBI Taxonomy" id="9541"/>
    <lineage>
        <taxon>Eukaryota</taxon>
        <taxon>Metazoa</taxon>
        <taxon>Chordata</taxon>
        <taxon>Craniata</taxon>
        <taxon>Vertebrata</taxon>
        <taxon>Euteleostomi</taxon>
        <taxon>Mammalia</taxon>
        <taxon>Eutheria</taxon>
        <taxon>Euarchontoglires</taxon>
        <taxon>Primates</taxon>
        <taxon>Haplorrhini</taxon>
        <taxon>Catarrhini</taxon>
        <taxon>Cercopithecidae</taxon>
        <taxon>Cercopithecinae</taxon>
        <taxon>Macaca</taxon>
    </lineage>
</organism>
<gene>
    <name type="primary">CCDC89</name>
    <name type="synonym">BOIP</name>
    <name type="ORF">QtsA-17020</name>
</gene>
<comment type="subunit">
    <text evidence="1">Interacts with HEY1.</text>
</comment>
<comment type="subcellular location">
    <subcellularLocation>
        <location evidence="1">Cytoplasm</location>
    </subcellularLocation>
    <subcellularLocation>
        <location evidence="1">Nucleus</location>
    </subcellularLocation>
    <text evidence="1">Uniformly distributed within the cell, but becomes recruited to the nucleus upon binding to HEY1.</text>
</comment>
<comment type="similarity">
    <text evidence="5">Belongs to the CCDC89 family.</text>
</comment>
<dbReference type="EMBL" id="AB070192">
    <property type="protein sequence ID" value="BAB63137.1"/>
    <property type="molecule type" value="mRNA"/>
</dbReference>
<dbReference type="RefSeq" id="NP_001274654.1">
    <property type="nucleotide sequence ID" value="NM_001287725.1"/>
</dbReference>
<dbReference type="RefSeq" id="XP_015290848.1">
    <property type="nucleotide sequence ID" value="XM_015435362.3"/>
</dbReference>
<dbReference type="RefSeq" id="XP_015290849.1">
    <property type="nucleotide sequence ID" value="XM_015435363.3"/>
</dbReference>
<dbReference type="RefSeq" id="XP_015290850.1">
    <property type="nucleotide sequence ID" value="XM_015435364.1"/>
</dbReference>
<dbReference type="RefSeq" id="XP_015290851.1">
    <property type="nucleotide sequence ID" value="XM_015435365.3"/>
</dbReference>
<dbReference type="RefSeq" id="XP_015290852.1">
    <property type="nucleotide sequence ID" value="XM_015435366.3"/>
</dbReference>
<dbReference type="RefSeq" id="XP_015290853.1">
    <property type="nucleotide sequence ID" value="XM_015435367.3"/>
</dbReference>
<dbReference type="RefSeq" id="XP_015290854.1">
    <property type="nucleotide sequence ID" value="XM_015435368.3"/>
</dbReference>
<dbReference type="RefSeq" id="XP_015290855.1">
    <property type="nucleotide sequence ID" value="XM_015435369.3"/>
</dbReference>
<dbReference type="RefSeq" id="XP_015290856.1">
    <property type="nucleotide sequence ID" value="XM_015435370.3"/>
</dbReference>
<dbReference type="RefSeq" id="XP_015290857.1">
    <property type="nucleotide sequence ID" value="XM_015435371.3"/>
</dbReference>
<dbReference type="RefSeq" id="XP_015290858.1">
    <property type="nucleotide sequence ID" value="XM_015435372.1"/>
</dbReference>
<dbReference type="RefSeq" id="XP_045226128.1">
    <property type="nucleotide sequence ID" value="XM_045370193.2"/>
</dbReference>
<dbReference type="RefSeq" id="XP_065385707.1">
    <property type="nucleotide sequence ID" value="XM_065529635.1"/>
</dbReference>
<dbReference type="RefSeq" id="XP_065385709.1">
    <property type="nucleotide sequence ID" value="XM_065529637.1"/>
</dbReference>
<dbReference type="SMR" id="Q95JI9"/>
<dbReference type="GeneID" id="102147065"/>
<dbReference type="CTD" id="220388"/>
<dbReference type="VEuPathDB" id="HostDB:ENSMFAG00000015719"/>
<dbReference type="eggNOG" id="ENOG502QU10">
    <property type="taxonomic scope" value="Eukaryota"/>
</dbReference>
<dbReference type="OMA" id="AMLCSRI"/>
<dbReference type="Proteomes" id="UP000233100">
    <property type="component" value="Chromosome 14"/>
</dbReference>
<dbReference type="GO" id="GO:0005737">
    <property type="term" value="C:cytoplasm"/>
    <property type="evidence" value="ECO:0007669"/>
    <property type="project" value="UniProtKB-SubCell"/>
</dbReference>
<dbReference type="GO" id="GO:0005634">
    <property type="term" value="C:nucleus"/>
    <property type="evidence" value="ECO:0007669"/>
    <property type="project" value="UniProtKB-SubCell"/>
</dbReference>
<dbReference type="InterPro" id="IPR043450">
    <property type="entry name" value="CCDC89-like"/>
</dbReference>
<dbReference type="PANTHER" id="PTHR34768">
    <property type="entry name" value="COILED-COIL DOMAIN-CONTAINING PROTEIN 89"/>
    <property type="match status" value="1"/>
</dbReference>
<dbReference type="PANTHER" id="PTHR34768:SF1">
    <property type="entry name" value="COILED-COIL DOMAIN-CONTAINING PROTEIN 89"/>
    <property type="match status" value="1"/>
</dbReference>
<keyword id="KW-0175">Coiled coil</keyword>
<keyword id="KW-0963">Cytoplasm</keyword>
<keyword id="KW-0539">Nucleus</keyword>
<keyword id="KW-0597">Phosphoprotein</keyword>
<keyword id="KW-1185">Reference proteome</keyword>
<proteinExistence type="evidence at transcript level"/>
<name>CCD89_MACFA</name>
<reference key="1">
    <citation type="journal article" date="2002" name="BMC Genomics">
        <title>Cynomolgus monkey testicular cDNAs for discovery of novel human genes in the human genome sequence.</title>
        <authorList>
            <person name="Osada N."/>
            <person name="Hida M."/>
            <person name="Kusuda J."/>
            <person name="Tanuma R."/>
            <person name="Hirata M."/>
            <person name="Suto Y."/>
            <person name="Hirai M."/>
            <person name="Terao K."/>
            <person name="Sugano S."/>
            <person name="Hashimoto K."/>
        </authorList>
    </citation>
    <scope>NUCLEOTIDE SEQUENCE [LARGE SCALE MRNA]</scope>
    <source>
        <tissue>Testis</tissue>
    </source>
</reference>
<reference key="2">
    <citation type="journal article" date="2003" name="Dev. Dyn.">
        <title>Identification of BOIP, a novel cDNA highly expressed during spermatogenesis that encodes a protein interacting with the orange domain of the hairy-related transcription factor HRT1/Hey1 in Xenopus and mouse.</title>
        <authorList>
            <person name="Van Wayenbergh R."/>
            <person name="Taelman V."/>
            <person name="Pichon B."/>
            <person name="Fischer A."/>
            <person name="Kricha S."/>
            <person name="Gessler M."/>
            <person name="Christophe D."/>
            <person name="Bellefroid E.J."/>
        </authorList>
    </citation>
    <scope>IDENTIFICATION</scope>
</reference>
<protein>
    <recommendedName>
        <fullName>Coiled-coil domain-containing protein 89</fullName>
    </recommendedName>
    <alternativeName>
        <fullName>Bc8 orange-interacting protein</fullName>
    </alternativeName>
</protein>
<accession>Q95JI9</accession>